<organism>
    <name type="scientific">Ralstonia pickettii (strain 12J)</name>
    <dbReference type="NCBI Taxonomy" id="402626"/>
    <lineage>
        <taxon>Bacteria</taxon>
        <taxon>Pseudomonadati</taxon>
        <taxon>Pseudomonadota</taxon>
        <taxon>Betaproteobacteria</taxon>
        <taxon>Burkholderiales</taxon>
        <taxon>Burkholderiaceae</taxon>
        <taxon>Ralstonia</taxon>
    </lineage>
</organism>
<feature type="chain" id="PRO_1000138820" description="Orotate phosphoribosyltransferase">
    <location>
        <begin position="1"/>
        <end position="225"/>
    </location>
</feature>
<feature type="binding site" description="in other chain" evidence="1">
    <location>
        <position position="29"/>
    </location>
    <ligand>
        <name>5-phospho-alpha-D-ribose 1-diphosphate</name>
        <dbReference type="ChEBI" id="CHEBI:58017"/>
        <note>ligand shared between dimeric partners</note>
    </ligand>
</feature>
<feature type="binding site" evidence="1">
    <location>
        <begin position="37"/>
        <end position="38"/>
    </location>
    <ligand>
        <name>orotate</name>
        <dbReference type="ChEBI" id="CHEBI:30839"/>
    </ligand>
</feature>
<feature type="binding site" description="in other chain" evidence="1">
    <location>
        <begin position="75"/>
        <end position="76"/>
    </location>
    <ligand>
        <name>5-phospho-alpha-D-ribose 1-diphosphate</name>
        <dbReference type="ChEBI" id="CHEBI:58017"/>
        <note>ligand shared between dimeric partners</note>
    </ligand>
</feature>
<feature type="binding site" evidence="1">
    <location>
        <position position="101"/>
    </location>
    <ligand>
        <name>5-phospho-alpha-D-ribose 1-diphosphate</name>
        <dbReference type="ChEBI" id="CHEBI:58017"/>
        <note>ligand shared between dimeric partners</note>
    </ligand>
</feature>
<feature type="binding site" description="in other chain" evidence="1">
    <location>
        <position position="102"/>
    </location>
    <ligand>
        <name>5-phospho-alpha-D-ribose 1-diphosphate</name>
        <dbReference type="ChEBI" id="CHEBI:58017"/>
        <note>ligand shared between dimeric partners</note>
    </ligand>
</feature>
<feature type="binding site" evidence="1">
    <location>
        <position position="105"/>
    </location>
    <ligand>
        <name>5-phospho-alpha-D-ribose 1-diphosphate</name>
        <dbReference type="ChEBI" id="CHEBI:58017"/>
        <note>ligand shared between dimeric partners</note>
    </ligand>
</feature>
<feature type="binding site" evidence="1">
    <location>
        <position position="107"/>
    </location>
    <ligand>
        <name>5-phospho-alpha-D-ribose 1-diphosphate</name>
        <dbReference type="ChEBI" id="CHEBI:58017"/>
        <note>ligand shared between dimeric partners</note>
    </ligand>
</feature>
<feature type="binding site" description="in other chain" evidence="1">
    <location>
        <begin position="126"/>
        <end position="134"/>
    </location>
    <ligand>
        <name>5-phospho-alpha-D-ribose 1-diphosphate</name>
        <dbReference type="ChEBI" id="CHEBI:58017"/>
        <note>ligand shared between dimeric partners</note>
    </ligand>
</feature>
<feature type="binding site" evidence="1">
    <location>
        <position position="130"/>
    </location>
    <ligand>
        <name>orotate</name>
        <dbReference type="ChEBI" id="CHEBI:30839"/>
    </ligand>
</feature>
<feature type="binding site" evidence="1">
    <location>
        <position position="158"/>
    </location>
    <ligand>
        <name>orotate</name>
        <dbReference type="ChEBI" id="CHEBI:30839"/>
    </ligand>
</feature>
<accession>B2UD27</accession>
<protein>
    <recommendedName>
        <fullName evidence="1">Orotate phosphoribosyltransferase</fullName>
        <shortName evidence="1">OPRT</shortName>
        <shortName evidence="1">OPRTase</shortName>
        <ecNumber evidence="1">2.4.2.10</ecNumber>
    </recommendedName>
</protein>
<name>PYRE_RALPJ</name>
<dbReference type="EC" id="2.4.2.10" evidence="1"/>
<dbReference type="EMBL" id="CP001068">
    <property type="protein sequence ID" value="ACD25206.1"/>
    <property type="molecule type" value="Genomic_DNA"/>
</dbReference>
<dbReference type="SMR" id="B2UD27"/>
<dbReference type="STRING" id="402626.Rpic_0041"/>
<dbReference type="KEGG" id="rpi:Rpic_0041"/>
<dbReference type="eggNOG" id="COG0461">
    <property type="taxonomic scope" value="Bacteria"/>
</dbReference>
<dbReference type="HOGENOM" id="CLU_074878_0_1_4"/>
<dbReference type="UniPathway" id="UPA00070">
    <property type="reaction ID" value="UER00119"/>
</dbReference>
<dbReference type="GO" id="GO:0005737">
    <property type="term" value="C:cytoplasm"/>
    <property type="evidence" value="ECO:0007669"/>
    <property type="project" value="TreeGrafter"/>
</dbReference>
<dbReference type="GO" id="GO:0000287">
    <property type="term" value="F:magnesium ion binding"/>
    <property type="evidence" value="ECO:0007669"/>
    <property type="project" value="UniProtKB-UniRule"/>
</dbReference>
<dbReference type="GO" id="GO:0004588">
    <property type="term" value="F:orotate phosphoribosyltransferase activity"/>
    <property type="evidence" value="ECO:0007669"/>
    <property type="project" value="UniProtKB-UniRule"/>
</dbReference>
<dbReference type="GO" id="GO:0006207">
    <property type="term" value="P:'de novo' pyrimidine nucleobase biosynthetic process"/>
    <property type="evidence" value="ECO:0007669"/>
    <property type="project" value="TreeGrafter"/>
</dbReference>
<dbReference type="GO" id="GO:0044205">
    <property type="term" value="P:'de novo' UMP biosynthetic process"/>
    <property type="evidence" value="ECO:0007669"/>
    <property type="project" value="UniProtKB-UniRule"/>
</dbReference>
<dbReference type="GO" id="GO:0046132">
    <property type="term" value="P:pyrimidine ribonucleoside biosynthetic process"/>
    <property type="evidence" value="ECO:0007669"/>
    <property type="project" value="TreeGrafter"/>
</dbReference>
<dbReference type="CDD" id="cd06223">
    <property type="entry name" value="PRTases_typeI"/>
    <property type="match status" value="1"/>
</dbReference>
<dbReference type="FunFam" id="3.40.50.2020:FF:000008">
    <property type="entry name" value="Orotate phosphoribosyltransferase"/>
    <property type="match status" value="1"/>
</dbReference>
<dbReference type="Gene3D" id="3.40.50.2020">
    <property type="match status" value="1"/>
</dbReference>
<dbReference type="HAMAP" id="MF_01208">
    <property type="entry name" value="PyrE"/>
    <property type="match status" value="1"/>
</dbReference>
<dbReference type="InterPro" id="IPR023031">
    <property type="entry name" value="OPRT"/>
</dbReference>
<dbReference type="InterPro" id="IPR004467">
    <property type="entry name" value="Or_phspho_trans_dom"/>
</dbReference>
<dbReference type="InterPro" id="IPR000836">
    <property type="entry name" value="PRibTrfase_dom"/>
</dbReference>
<dbReference type="InterPro" id="IPR029057">
    <property type="entry name" value="PRTase-like"/>
</dbReference>
<dbReference type="NCBIfam" id="TIGR00336">
    <property type="entry name" value="pyrE"/>
    <property type="match status" value="1"/>
</dbReference>
<dbReference type="PANTHER" id="PTHR46683">
    <property type="entry name" value="OROTATE PHOSPHORIBOSYLTRANSFERASE 1-RELATED"/>
    <property type="match status" value="1"/>
</dbReference>
<dbReference type="PANTHER" id="PTHR46683:SF1">
    <property type="entry name" value="OROTATE PHOSPHORIBOSYLTRANSFERASE 1-RELATED"/>
    <property type="match status" value="1"/>
</dbReference>
<dbReference type="Pfam" id="PF00156">
    <property type="entry name" value="Pribosyltran"/>
    <property type="match status" value="1"/>
</dbReference>
<dbReference type="SUPFAM" id="SSF53271">
    <property type="entry name" value="PRTase-like"/>
    <property type="match status" value="1"/>
</dbReference>
<dbReference type="PROSITE" id="PS00103">
    <property type="entry name" value="PUR_PYR_PR_TRANSFER"/>
    <property type="match status" value="1"/>
</dbReference>
<keyword id="KW-0328">Glycosyltransferase</keyword>
<keyword id="KW-0460">Magnesium</keyword>
<keyword id="KW-0665">Pyrimidine biosynthesis</keyword>
<keyword id="KW-0808">Transferase</keyword>
<comment type="function">
    <text evidence="1">Catalyzes the transfer of a ribosyl phosphate group from 5-phosphoribose 1-diphosphate to orotate, leading to the formation of orotidine monophosphate (OMP).</text>
</comment>
<comment type="catalytic activity">
    <reaction evidence="1">
        <text>orotidine 5'-phosphate + diphosphate = orotate + 5-phospho-alpha-D-ribose 1-diphosphate</text>
        <dbReference type="Rhea" id="RHEA:10380"/>
        <dbReference type="ChEBI" id="CHEBI:30839"/>
        <dbReference type="ChEBI" id="CHEBI:33019"/>
        <dbReference type="ChEBI" id="CHEBI:57538"/>
        <dbReference type="ChEBI" id="CHEBI:58017"/>
        <dbReference type="EC" id="2.4.2.10"/>
    </reaction>
</comment>
<comment type="cofactor">
    <cofactor evidence="1">
        <name>Mg(2+)</name>
        <dbReference type="ChEBI" id="CHEBI:18420"/>
    </cofactor>
</comment>
<comment type="pathway">
    <text evidence="1">Pyrimidine metabolism; UMP biosynthesis via de novo pathway; UMP from orotate: step 1/2.</text>
</comment>
<comment type="subunit">
    <text evidence="1">Homodimer.</text>
</comment>
<comment type="similarity">
    <text evidence="1">Belongs to the purine/pyrimidine phosphoribosyltransferase family. PyrE subfamily.</text>
</comment>
<proteinExistence type="inferred from homology"/>
<sequence length="225" mass="23701">MSQNSELRQSFIRFAVEAGVLSFGEFVTKAGRTSPYFFNAGKFADGALLGQVAQFYAKTLLDSGVEFDMLFGPAYKGITLASATAVALAGLGRNVGFAYNRKEAKDHGEGGSLVGAKLQGRVVIVDDVISAGTSVRESVELIRAAGATPAAVLILMDRMERSGNAVDIGERSAVQDVQAQYGMPVVSIANLDDLLGYLDNAGDPALAGYREKAAAYRDKYGVSAI</sequence>
<gene>
    <name evidence="1" type="primary">pyrE</name>
    <name type="ordered locus">Rpic_0041</name>
</gene>
<reference key="1">
    <citation type="submission" date="2008-05" db="EMBL/GenBank/DDBJ databases">
        <title>Complete sequence of chromosome 1 of Ralstonia pickettii 12J.</title>
        <authorList>
            <person name="Lucas S."/>
            <person name="Copeland A."/>
            <person name="Lapidus A."/>
            <person name="Glavina del Rio T."/>
            <person name="Dalin E."/>
            <person name="Tice H."/>
            <person name="Bruce D."/>
            <person name="Goodwin L."/>
            <person name="Pitluck S."/>
            <person name="Meincke L."/>
            <person name="Brettin T."/>
            <person name="Detter J.C."/>
            <person name="Han C."/>
            <person name="Kuske C.R."/>
            <person name="Schmutz J."/>
            <person name="Larimer F."/>
            <person name="Land M."/>
            <person name="Hauser L."/>
            <person name="Kyrpides N."/>
            <person name="Mikhailova N."/>
            <person name="Marsh T."/>
            <person name="Richardson P."/>
        </authorList>
    </citation>
    <scope>NUCLEOTIDE SEQUENCE [LARGE SCALE GENOMIC DNA]</scope>
    <source>
        <strain>12J</strain>
    </source>
</reference>
<evidence type="ECO:0000255" key="1">
    <source>
        <dbReference type="HAMAP-Rule" id="MF_01208"/>
    </source>
</evidence>